<protein>
    <recommendedName>
        <fullName>Nitrogenase iron-molybdenum cofactor biosynthesis protein NifE</fullName>
    </recommendedName>
</protein>
<sequence>MTSLSAKIQDVFDEPACDTNRGKDAKARKEGCSKPLTPGASAGGCAFDGAKIVLQPITDVAHLVHAPLACEGNSWDNRGAASSGPTLWRTSFTTDLTELDIVMGQGERKLFKAIREIKETYAPPAVFVYSTCVTALIGDDIEAVCKRAAEKFGLAVVPINAPGLAGSKNLGNKLAAEALLDHVIGTVEPDDAGPYDINILGEFNLSGEFWLVKPLLDRLGIRVRACIPGDARYIDVASAHRARAAMMVCSSALINLARKMEERWDIPYFEGSFYGITDTSEALRNIAELLVRKGADAEILDRTETLIAEQEAIAWKKLEAYRRRLQGKRVLLNTGGVKSWSVVHALMEIGMEIVGTSVKKSTVEDKERIKRILKDENHMFEQMAARDLYAMLSKHKADIMLSGGRTQFVALKAKTPWLDINQERQHPYAGYDGMVELVRQIDLAIHNPIWGQVREPAPWDCQPAREDDLASAKNGTATVNAFNEFAGAMAHRFGDR</sequence>
<evidence type="ECO:0000305" key="1"/>
<dbReference type="EMBL" id="BA000012">
    <property type="protein sequence ID" value="BAB52278.1"/>
    <property type="molecule type" value="Genomic_DNA"/>
</dbReference>
<dbReference type="RefSeq" id="WP_010913611.1">
    <property type="nucleotide sequence ID" value="NC_002678.2"/>
</dbReference>
<dbReference type="SMR" id="Q98AP4"/>
<dbReference type="KEGG" id="mlo:mlr5908"/>
<dbReference type="PATRIC" id="fig|266835.9.peg.4703"/>
<dbReference type="eggNOG" id="COG2710">
    <property type="taxonomic scope" value="Bacteria"/>
</dbReference>
<dbReference type="HOGENOM" id="CLU_025876_1_1_5"/>
<dbReference type="UniPathway" id="UPA00782"/>
<dbReference type="Proteomes" id="UP000000552">
    <property type="component" value="Chromosome"/>
</dbReference>
<dbReference type="GO" id="GO:0016163">
    <property type="term" value="F:nitrogenase activity"/>
    <property type="evidence" value="ECO:0007669"/>
    <property type="project" value="InterPro"/>
</dbReference>
<dbReference type="GO" id="GO:0009399">
    <property type="term" value="P:nitrogen fixation"/>
    <property type="evidence" value="ECO:0007669"/>
    <property type="project" value="UniProtKB-KW"/>
</dbReference>
<dbReference type="GO" id="GO:0065003">
    <property type="term" value="P:protein-containing complex assembly"/>
    <property type="evidence" value="ECO:0007669"/>
    <property type="project" value="InterPro"/>
</dbReference>
<dbReference type="CDD" id="cd01968">
    <property type="entry name" value="Nitrogenase_NifE_I"/>
    <property type="match status" value="1"/>
</dbReference>
<dbReference type="Gene3D" id="3.40.50.12380">
    <property type="entry name" value="Nitrogenase MoFe cofactor biosynthesis protein NifE, C-terminal"/>
    <property type="match status" value="1"/>
</dbReference>
<dbReference type="Gene3D" id="3.40.50.1980">
    <property type="entry name" value="Nitrogenase molybdenum iron protein domain"/>
    <property type="match status" value="1"/>
</dbReference>
<dbReference type="InterPro" id="IPR000510">
    <property type="entry name" value="Nase/OxRdtase_comp1"/>
</dbReference>
<dbReference type="InterPro" id="IPR000318">
    <property type="entry name" value="Nase_comp1_CS"/>
</dbReference>
<dbReference type="InterPro" id="IPR005973">
    <property type="entry name" value="NifE"/>
</dbReference>
<dbReference type="InterPro" id="IPR049939">
    <property type="entry name" value="NifE-like"/>
</dbReference>
<dbReference type="NCBIfam" id="TIGR01283">
    <property type="entry name" value="nifE"/>
    <property type="match status" value="1"/>
</dbReference>
<dbReference type="PANTHER" id="PTHR42956">
    <property type="entry name" value="NITROGENASE IRON-MOLYBDENUM COFACTOR BIOSYNTHESIS PROTEIN NIFE"/>
    <property type="match status" value="1"/>
</dbReference>
<dbReference type="PANTHER" id="PTHR42956:SF1">
    <property type="entry name" value="NITROGENASE IRON-MOLYBDENUM COFACTOR BIOSYNTHESIS PROTEIN NIFE"/>
    <property type="match status" value="1"/>
</dbReference>
<dbReference type="Pfam" id="PF00148">
    <property type="entry name" value="Oxidored_nitro"/>
    <property type="match status" value="1"/>
</dbReference>
<dbReference type="SUPFAM" id="SSF53807">
    <property type="entry name" value="Helical backbone' metal receptor"/>
    <property type="match status" value="1"/>
</dbReference>
<dbReference type="PROSITE" id="PS00699">
    <property type="entry name" value="NITROGENASE_1_1"/>
    <property type="match status" value="1"/>
</dbReference>
<dbReference type="PROSITE" id="PS00090">
    <property type="entry name" value="NITROGENASE_1_2"/>
    <property type="match status" value="1"/>
</dbReference>
<keyword id="KW-0535">Nitrogen fixation</keyword>
<accession>Q98AP4</accession>
<organism>
    <name type="scientific">Mesorhizobium japonicum (strain LMG 29417 / CECT 9101 / MAFF 303099)</name>
    <name type="common">Mesorhizobium loti (strain MAFF 303099)</name>
    <dbReference type="NCBI Taxonomy" id="266835"/>
    <lineage>
        <taxon>Bacteria</taxon>
        <taxon>Pseudomonadati</taxon>
        <taxon>Pseudomonadota</taxon>
        <taxon>Alphaproteobacteria</taxon>
        <taxon>Hyphomicrobiales</taxon>
        <taxon>Phyllobacteriaceae</taxon>
        <taxon>Mesorhizobium</taxon>
    </lineage>
</organism>
<name>NIFE_RHILO</name>
<feature type="chain" id="PRO_0000153120" description="Nitrogenase iron-molybdenum cofactor biosynthesis protein NifE">
    <location>
        <begin position="1"/>
        <end position="496"/>
    </location>
</feature>
<comment type="function">
    <text>This protein may play a role in the biosynthesis of the prosthetic group of nitrogenase (FeMo cofactor).</text>
</comment>
<comment type="pathway">
    <text>Cofactor biosynthesis; Fe-Mo cofactor biosynthesis.</text>
</comment>
<comment type="similarity">
    <text evidence="1">Belongs to the NifD/NifK/NifE/NifN family.</text>
</comment>
<gene>
    <name type="primary">nifE</name>
    <name type="ordered locus">mlr5908</name>
</gene>
<reference key="1">
    <citation type="journal article" date="2000" name="DNA Res.">
        <title>Complete genome structure of the nitrogen-fixing symbiotic bacterium Mesorhizobium loti.</title>
        <authorList>
            <person name="Kaneko T."/>
            <person name="Nakamura Y."/>
            <person name="Sato S."/>
            <person name="Asamizu E."/>
            <person name="Kato T."/>
            <person name="Sasamoto S."/>
            <person name="Watanabe A."/>
            <person name="Idesawa K."/>
            <person name="Ishikawa A."/>
            <person name="Kawashima K."/>
            <person name="Kimura T."/>
            <person name="Kishida Y."/>
            <person name="Kiyokawa C."/>
            <person name="Kohara M."/>
            <person name="Matsumoto M."/>
            <person name="Matsuno A."/>
            <person name="Mochizuki Y."/>
            <person name="Nakayama S."/>
            <person name="Nakazaki N."/>
            <person name="Shimpo S."/>
            <person name="Sugimoto M."/>
            <person name="Takeuchi C."/>
            <person name="Yamada M."/>
            <person name="Tabata S."/>
        </authorList>
    </citation>
    <scope>NUCLEOTIDE SEQUENCE [LARGE SCALE GENOMIC DNA]</scope>
    <source>
        <strain>LMG 29417 / CECT 9101 / MAFF 303099</strain>
    </source>
</reference>
<proteinExistence type="inferred from homology"/>